<feature type="chain" id="PRO_0000285986" description="Zinc finger Ran-binding domain-containing protein 2">
    <location>
        <begin position="1"/>
        <end position="334"/>
    </location>
</feature>
<feature type="zinc finger region" description="RanBP2-type 1" evidence="3">
    <location>
        <begin position="9"/>
        <end position="40"/>
    </location>
</feature>
<feature type="zinc finger region" description="RanBP2-type 2" evidence="3">
    <location>
        <begin position="65"/>
        <end position="94"/>
    </location>
</feature>
<feature type="region of interest" description="Disordered" evidence="4">
    <location>
        <begin position="117"/>
        <end position="334"/>
    </location>
</feature>
<feature type="compositionally biased region" description="Acidic residues" evidence="4">
    <location>
        <begin position="150"/>
        <end position="163"/>
    </location>
</feature>
<feature type="compositionally biased region" description="Basic residues" evidence="4">
    <location>
        <begin position="196"/>
        <end position="212"/>
    </location>
</feature>
<feature type="compositionally biased region" description="Low complexity" evidence="4">
    <location>
        <begin position="213"/>
        <end position="224"/>
    </location>
</feature>
<feature type="compositionally biased region" description="Low complexity" evidence="4">
    <location>
        <begin position="258"/>
        <end position="285"/>
    </location>
</feature>
<feature type="compositionally biased region" description="Basic residues" evidence="4">
    <location>
        <begin position="302"/>
        <end position="318"/>
    </location>
</feature>
<feature type="compositionally biased region" description="Low complexity" evidence="4">
    <location>
        <begin position="319"/>
        <end position="334"/>
    </location>
</feature>
<protein>
    <recommendedName>
        <fullName>Zinc finger Ran-binding domain-containing protein 2</fullName>
    </recommendedName>
</protein>
<organism>
    <name type="scientific">Gallus gallus</name>
    <name type="common">Chicken</name>
    <dbReference type="NCBI Taxonomy" id="9031"/>
    <lineage>
        <taxon>Eukaryota</taxon>
        <taxon>Metazoa</taxon>
        <taxon>Chordata</taxon>
        <taxon>Craniata</taxon>
        <taxon>Vertebrata</taxon>
        <taxon>Euteleostomi</taxon>
        <taxon>Archelosauria</taxon>
        <taxon>Archosauria</taxon>
        <taxon>Dinosauria</taxon>
        <taxon>Saurischia</taxon>
        <taxon>Theropoda</taxon>
        <taxon>Coelurosauria</taxon>
        <taxon>Aves</taxon>
        <taxon>Neognathae</taxon>
        <taxon>Galloanserae</taxon>
        <taxon>Galliformes</taxon>
        <taxon>Phasianidae</taxon>
        <taxon>Phasianinae</taxon>
        <taxon>Gallus</taxon>
    </lineage>
</organism>
<gene>
    <name evidence="1" type="primary">ZRANB2</name>
    <name type="ORF">RCJMB04_4i6</name>
</gene>
<name>ZRAB2_CHICK</name>
<keyword id="KW-0479">Metal-binding</keyword>
<keyword id="KW-0539">Nucleus</keyword>
<keyword id="KW-0597">Phosphoprotein</keyword>
<keyword id="KW-1185">Reference proteome</keyword>
<keyword id="KW-0677">Repeat</keyword>
<keyword id="KW-0694">RNA-binding</keyword>
<keyword id="KW-0862">Zinc</keyword>
<keyword id="KW-0863">Zinc-finger</keyword>
<accession>Q5ZLX5</accession>
<sequence>MSTKNFRVSDGDWICPDKKCGNVNFARRTSCNRCGREKTTEAKMMKAGGTEIGKTLAEKSRGLFSANDWQCKTCGNVNWARRSECNMCNTPKYAKLEERTGYGGGFNERENVEYIEREESDGEYDEFGRKKKKYRGKPVGPASILKEVEDKESEGEDEEDEDGDLSKYKLDEDEDEDDADLSKYNLDASEEEDTNKKKKSNRRSRSKSRSSHSRSSSRSSSHSSSRSRSRSHSRSSSSSRSRSRSSSREHSRSRGSKSRSSSRSYRGSSTPRKRSYSSSRSSSSPERSKKRSRSRSSSSGDRKKRRSRSRSPERRRRSSSGSSHSGSRTSSKKK</sequence>
<evidence type="ECO:0000250" key="1">
    <source>
        <dbReference type="UniProtKB" id="O95218"/>
    </source>
</evidence>
<evidence type="ECO:0000255" key="2"/>
<evidence type="ECO:0000255" key="3">
    <source>
        <dbReference type="PROSITE-ProRule" id="PRU00322"/>
    </source>
</evidence>
<evidence type="ECO:0000256" key="4">
    <source>
        <dbReference type="SAM" id="MobiDB-lite"/>
    </source>
</evidence>
<evidence type="ECO:0000312" key="5">
    <source>
        <dbReference type="EMBL" id="CAG31268.1"/>
    </source>
</evidence>
<proteinExistence type="evidence at transcript level"/>
<dbReference type="EMBL" id="AJ719609">
    <property type="protein sequence ID" value="CAG31268.1"/>
    <property type="molecule type" value="mRNA"/>
</dbReference>
<dbReference type="RefSeq" id="NP_001026468.1">
    <property type="nucleotide sequence ID" value="NM_001031297.3"/>
</dbReference>
<dbReference type="RefSeq" id="XP_015146542.1">
    <property type="nucleotide sequence ID" value="XM_015291056.1"/>
</dbReference>
<dbReference type="SMR" id="Q5ZLX5"/>
<dbReference type="FunCoup" id="Q5ZLX5">
    <property type="interactions" value="18"/>
</dbReference>
<dbReference type="STRING" id="9031.ENSGALP00000018494"/>
<dbReference type="PaxDb" id="9031-ENSGALP00000018494"/>
<dbReference type="GeneID" id="424717"/>
<dbReference type="KEGG" id="gga:424717"/>
<dbReference type="CTD" id="9406"/>
<dbReference type="VEuPathDB" id="HostDB:geneid_424717"/>
<dbReference type="eggNOG" id="KOG1995">
    <property type="taxonomic scope" value="Eukaryota"/>
</dbReference>
<dbReference type="HOGENOM" id="CLU_061048_0_0_1"/>
<dbReference type="InParanoid" id="Q5ZLX5"/>
<dbReference type="OMA" id="WICPDID"/>
<dbReference type="OrthoDB" id="1878647at2759"/>
<dbReference type="PhylomeDB" id="Q5ZLX5"/>
<dbReference type="TreeFam" id="TF105996"/>
<dbReference type="PRO" id="PR:Q5ZLX5"/>
<dbReference type="Proteomes" id="UP000000539">
    <property type="component" value="Chromosome 8"/>
</dbReference>
<dbReference type="Bgee" id="ENSGALG00000011340">
    <property type="expression patterns" value="Expressed in ovary and 12 other cell types or tissues"/>
</dbReference>
<dbReference type="GO" id="GO:0005634">
    <property type="term" value="C:nucleus"/>
    <property type="evidence" value="ECO:0007669"/>
    <property type="project" value="UniProtKB-SubCell"/>
</dbReference>
<dbReference type="GO" id="GO:0001530">
    <property type="term" value="F:lipopolysaccharide binding"/>
    <property type="evidence" value="ECO:0000318"/>
    <property type="project" value="GO_Central"/>
</dbReference>
<dbReference type="GO" id="GO:0003723">
    <property type="term" value="F:RNA binding"/>
    <property type="evidence" value="ECO:0007669"/>
    <property type="project" value="UniProtKB-KW"/>
</dbReference>
<dbReference type="GO" id="GO:0008270">
    <property type="term" value="F:zinc ion binding"/>
    <property type="evidence" value="ECO:0007669"/>
    <property type="project" value="UniProtKB-KW"/>
</dbReference>
<dbReference type="GO" id="GO:0006396">
    <property type="term" value="P:RNA processing"/>
    <property type="evidence" value="ECO:0007669"/>
    <property type="project" value="InterPro"/>
</dbReference>
<dbReference type="FunFam" id="4.10.1060.10:FF:000004">
    <property type="entry name" value="Zinc finger Ran-binding domain-containing protein 2"/>
    <property type="match status" value="1"/>
</dbReference>
<dbReference type="FunFam" id="4.10.1060.10:FF:000007">
    <property type="entry name" value="Zinc finger Ran-binding domain-containing protein 2"/>
    <property type="match status" value="1"/>
</dbReference>
<dbReference type="Gene3D" id="4.10.1060.10">
    <property type="entry name" value="Zinc finger, RanBP2-type"/>
    <property type="match status" value="2"/>
</dbReference>
<dbReference type="InterPro" id="IPR001876">
    <property type="entry name" value="Znf_RanBP2"/>
</dbReference>
<dbReference type="InterPro" id="IPR036443">
    <property type="entry name" value="Znf_RanBP2_sf"/>
</dbReference>
<dbReference type="InterPro" id="IPR017337">
    <property type="entry name" value="ZRANB2"/>
</dbReference>
<dbReference type="PANTHER" id="PTHR12999:SF17">
    <property type="entry name" value="ZINC FINGER RAN-BINDING DOMAIN-CONTAINING PROTEIN 2"/>
    <property type="match status" value="1"/>
</dbReference>
<dbReference type="PANTHER" id="PTHR12999">
    <property type="entry name" value="ZINC FINGER RAN-BINDING DOMAIN-CONTAINING PROTEIN 2 ZRANB2-RELATED"/>
    <property type="match status" value="1"/>
</dbReference>
<dbReference type="Pfam" id="PF00641">
    <property type="entry name" value="Zn_ribbon_RanBP"/>
    <property type="match status" value="2"/>
</dbReference>
<dbReference type="PIRSF" id="PIRSF037956">
    <property type="entry name" value="UCP037956_ZnF_Ran"/>
    <property type="match status" value="1"/>
</dbReference>
<dbReference type="SMART" id="SM00547">
    <property type="entry name" value="ZnF_RBZ"/>
    <property type="match status" value="2"/>
</dbReference>
<dbReference type="SUPFAM" id="SSF90209">
    <property type="entry name" value="Ran binding protein zinc finger-like"/>
    <property type="match status" value="2"/>
</dbReference>
<dbReference type="PROSITE" id="PS01358">
    <property type="entry name" value="ZF_RANBP2_1"/>
    <property type="match status" value="2"/>
</dbReference>
<dbReference type="PROSITE" id="PS50199">
    <property type="entry name" value="ZF_RANBP2_2"/>
    <property type="match status" value="2"/>
</dbReference>
<comment type="function">
    <text evidence="1">May regulate alternative splicing by interfering with constitutive 5'-splice site selection.</text>
</comment>
<comment type="subcellular location">
    <subcellularLocation>
        <location evidence="1">Nucleus</location>
    </subcellularLocation>
</comment>
<comment type="domain">
    <text evidence="1">The RanBP2-type zinc fingers mediate binding to RNA.</text>
</comment>
<comment type="similarity">
    <text evidence="2">Belongs to the ZRANB2 family.</text>
</comment>
<reference evidence="5" key="1">
    <citation type="journal article" date="2005" name="Genome Biol.">
        <title>Full-length cDNAs from chicken bursal lymphocytes to facilitate gene function analysis.</title>
        <authorList>
            <person name="Caldwell R.B."/>
            <person name="Kierzek A.M."/>
            <person name="Arakawa H."/>
            <person name="Bezzubov Y."/>
            <person name="Zaim J."/>
            <person name="Fiedler P."/>
            <person name="Kutter S."/>
            <person name="Blagodatski A."/>
            <person name="Kostovska D."/>
            <person name="Koter M."/>
            <person name="Plachy J."/>
            <person name="Carninci P."/>
            <person name="Hayashizaki Y."/>
            <person name="Buerstedde J.-M."/>
        </authorList>
    </citation>
    <scope>NUCLEOTIDE SEQUENCE [LARGE SCALE MRNA]</scope>
    <source>
        <strain evidence="5">CB</strain>
        <tissue evidence="5">Bursa of Fabricius</tissue>
    </source>
</reference>